<evidence type="ECO:0000255" key="1">
    <source>
        <dbReference type="HAMAP-Rule" id="MF_01697"/>
    </source>
</evidence>
<evidence type="ECO:0000256" key="2">
    <source>
        <dbReference type="SAM" id="MobiDB-lite"/>
    </source>
</evidence>
<accession>C7NHQ9</accession>
<protein>
    <recommendedName>
        <fullName evidence="1">L-cysteine:1D-myo-inositol 2-amino-2-deoxy-alpha-D-glucopyranoside ligase</fullName>
        <shortName evidence="1">L-Cys:GlcN-Ins ligase</shortName>
        <ecNumber evidence="1">6.3.1.13</ecNumber>
    </recommendedName>
    <alternativeName>
        <fullName evidence="1">Mycothiol ligase</fullName>
        <shortName evidence="1">MSH ligase</shortName>
    </alternativeName>
</protein>
<feature type="chain" id="PRO_0000400454" description="L-cysteine:1D-myo-inositol 2-amino-2-deoxy-alpha-D-glucopyranoside ligase">
    <location>
        <begin position="1"/>
        <end position="438"/>
    </location>
</feature>
<feature type="region of interest" description="Disordered" evidence="2">
    <location>
        <begin position="1"/>
        <end position="27"/>
    </location>
</feature>
<feature type="short sequence motif" description="'HIGH' region" evidence="1">
    <location>
        <begin position="47"/>
        <end position="57"/>
    </location>
</feature>
<feature type="short sequence motif" description="'ERGGDP' region" evidence="1">
    <location>
        <begin position="197"/>
        <end position="202"/>
    </location>
</feature>
<feature type="short sequence motif" description="'KMSKS' region" evidence="1">
    <location>
        <begin position="299"/>
        <end position="303"/>
    </location>
</feature>
<feature type="binding site" evidence="1">
    <location>
        <begin position="45"/>
        <end position="48"/>
    </location>
    <ligand>
        <name>L-cysteinyl-5'-AMP</name>
        <dbReference type="ChEBI" id="CHEBI:144924"/>
    </ligand>
</feature>
<feature type="binding site" evidence="1">
    <location>
        <position position="45"/>
    </location>
    <ligand>
        <name>Zn(2+)</name>
        <dbReference type="ChEBI" id="CHEBI:29105"/>
    </ligand>
</feature>
<feature type="binding site" evidence="1">
    <location>
        <position position="60"/>
    </location>
    <ligand>
        <name>L-cysteinyl-5'-AMP</name>
        <dbReference type="ChEBI" id="CHEBI:144924"/>
    </ligand>
</feature>
<feature type="binding site" evidence="1">
    <location>
        <begin position="83"/>
        <end position="85"/>
    </location>
    <ligand>
        <name>L-cysteinyl-5'-AMP</name>
        <dbReference type="ChEBI" id="CHEBI:144924"/>
    </ligand>
</feature>
<feature type="binding site" evidence="1">
    <location>
        <position position="238"/>
    </location>
    <ligand>
        <name>L-cysteinyl-5'-AMP</name>
        <dbReference type="ChEBI" id="CHEBI:144924"/>
    </ligand>
</feature>
<feature type="binding site" evidence="1">
    <location>
        <position position="242"/>
    </location>
    <ligand>
        <name>Zn(2+)</name>
        <dbReference type="ChEBI" id="CHEBI:29105"/>
    </ligand>
</feature>
<feature type="binding site" evidence="1">
    <location>
        <begin position="260"/>
        <end position="262"/>
    </location>
    <ligand>
        <name>L-cysteinyl-5'-AMP</name>
        <dbReference type="ChEBI" id="CHEBI:144924"/>
    </ligand>
</feature>
<feature type="binding site" evidence="1">
    <location>
        <position position="267"/>
    </location>
    <ligand>
        <name>Zn(2+)</name>
        <dbReference type="ChEBI" id="CHEBI:29105"/>
    </ligand>
</feature>
<feature type="binding site" evidence="1">
    <location>
        <position position="293"/>
    </location>
    <ligand>
        <name>L-cysteinyl-5'-AMP</name>
        <dbReference type="ChEBI" id="CHEBI:144924"/>
    </ligand>
</feature>
<gene>
    <name evidence="1" type="primary">mshC</name>
    <name type="ordered locus">Ksed_13890</name>
</gene>
<reference key="1">
    <citation type="journal article" date="2009" name="Stand. Genomic Sci.">
        <title>Complete genome sequence of Kytococcus sedentarius type strain (541).</title>
        <authorList>
            <person name="Sims D."/>
            <person name="Brettin T."/>
            <person name="Detter J.C."/>
            <person name="Han C."/>
            <person name="Lapidus A."/>
            <person name="Copeland A."/>
            <person name="Glavina Del Rio T."/>
            <person name="Nolan M."/>
            <person name="Chen F."/>
            <person name="Lucas S."/>
            <person name="Tice H."/>
            <person name="Cheng J.F."/>
            <person name="Bruce D."/>
            <person name="Goodwin L."/>
            <person name="Pitluck S."/>
            <person name="Ovchinnikova G."/>
            <person name="Pati A."/>
            <person name="Ivanova N."/>
            <person name="Mavrommatis K."/>
            <person name="Chen A."/>
            <person name="Palaniappan K."/>
            <person name="D'haeseleer P."/>
            <person name="Chain P."/>
            <person name="Bristow J."/>
            <person name="Eisen J.A."/>
            <person name="Markowitz V."/>
            <person name="Hugenholtz P."/>
            <person name="Schneider S."/>
            <person name="Goker M."/>
            <person name="Pukall R."/>
            <person name="Kyrpides N.C."/>
            <person name="Klenk H.P."/>
        </authorList>
    </citation>
    <scope>NUCLEOTIDE SEQUENCE [LARGE SCALE GENOMIC DNA]</scope>
    <source>
        <strain>ATCC 14392 / DSM 20547 / JCM 11482 / CCUG 33030 / NBRC 15357 / NCTC 11040 / CCM 314 / 541</strain>
    </source>
</reference>
<sequence length="438" mass="47134">MDSWTSPDVPALPFTAEGPRVHDTARGAITPLTPRPGQEAGLYVCGITPYDATHLGHAATYLTFDLVNRALRAAGHPVRFVQNVTDVDEPLLERAERDGVHWEELASREIQLFRDDMAALRIIAPDAYVGAVEGIPSDVAAIRAMLESGRAYRVPAEDAAADAGESPADVYLDLAQVPTFGEVSHWTPTQMMEVFADRGGDPDRAGKRDRLDPLLWRAHREGEPHWEGGSLGAGRPGWHIECTTIARDHLGTPFLVQGGGDDLVFPHHEMSAAQTRALTDDAFAEHYVHQAMVGLDGEKMSKSKGNLVLVSRLRAAGEDPAAIRLALLSQHYRTAWEWTDAHLEAARQRLDRWRHAAQTATASPSTADAEDAPAGDAVARQLAERIADDLDAPGALAVVDRWADAVLGEQTGAAAAAARAEARGVRTAVDALLGIDLG</sequence>
<organism>
    <name type="scientific">Kytococcus sedentarius (strain ATCC 14392 / DSM 20547 / JCM 11482 / CCUG 33030 / NBRC 15357 / NCTC 11040 / CCM 314 / 541)</name>
    <name type="common">Micrococcus sedentarius</name>
    <dbReference type="NCBI Taxonomy" id="478801"/>
    <lineage>
        <taxon>Bacteria</taxon>
        <taxon>Bacillati</taxon>
        <taxon>Actinomycetota</taxon>
        <taxon>Actinomycetes</taxon>
        <taxon>Micrococcales</taxon>
        <taxon>Kytococcaceae</taxon>
        <taxon>Kytococcus</taxon>
    </lineage>
</organism>
<keyword id="KW-0067">ATP-binding</keyword>
<keyword id="KW-0436">Ligase</keyword>
<keyword id="KW-0479">Metal-binding</keyword>
<keyword id="KW-0547">Nucleotide-binding</keyword>
<keyword id="KW-0862">Zinc</keyword>
<dbReference type="EC" id="6.3.1.13" evidence="1"/>
<dbReference type="EMBL" id="CP001686">
    <property type="protein sequence ID" value="ACV06416.1"/>
    <property type="molecule type" value="Genomic_DNA"/>
</dbReference>
<dbReference type="RefSeq" id="WP_015779361.1">
    <property type="nucleotide sequence ID" value="NC_013169.1"/>
</dbReference>
<dbReference type="SMR" id="C7NHQ9"/>
<dbReference type="STRING" id="478801.Ksed_13890"/>
<dbReference type="KEGG" id="kse:Ksed_13890"/>
<dbReference type="eggNOG" id="COG0215">
    <property type="taxonomic scope" value="Bacteria"/>
</dbReference>
<dbReference type="HOGENOM" id="CLU_013528_0_0_11"/>
<dbReference type="Proteomes" id="UP000006666">
    <property type="component" value="Chromosome"/>
</dbReference>
<dbReference type="GO" id="GO:0005829">
    <property type="term" value="C:cytosol"/>
    <property type="evidence" value="ECO:0007669"/>
    <property type="project" value="TreeGrafter"/>
</dbReference>
<dbReference type="GO" id="GO:0005524">
    <property type="term" value="F:ATP binding"/>
    <property type="evidence" value="ECO:0007669"/>
    <property type="project" value="UniProtKB-KW"/>
</dbReference>
<dbReference type="GO" id="GO:0035446">
    <property type="term" value="F:cysteine-glucosaminylinositol ligase activity"/>
    <property type="evidence" value="ECO:0007669"/>
    <property type="project" value="UniProtKB-UniRule"/>
</dbReference>
<dbReference type="GO" id="GO:0004817">
    <property type="term" value="F:cysteine-tRNA ligase activity"/>
    <property type="evidence" value="ECO:0007669"/>
    <property type="project" value="TreeGrafter"/>
</dbReference>
<dbReference type="GO" id="GO:0008270">
    <property type="term" value="F:zinc ion binding"/>
    <property type="evidence" value="ECO:0007669"/>
    <property type="project" value="UniProtKB-UniRule"/>
</dbReference>
<dbReference type="GO" id="GO:0006423">
    <property type="term" value="P:cysteinyl-tRNA aminoacylation"/>
    <property type="evidence" value="ECO:0007669"/>
    <property type="project" value="TreeGrafter"/>
</dbReference>
<dbReference type="GO" id="GO:0010125">
    <property type="term" value="P:mycothiol biosynthetic process"/>
    <property type="evidence" value="ECO:0007669"/>
    <property type="project" value="UniProtKB-UniRule"/>
</dbReference>
<dbReference type="CDD" id="cd00672">
    <property type="entry name" value="CysRS_core"/>
    <property type="match status" value="1"/>
</dbReference>
<dbReference type="Gene3D" id="1.20.120.640">
    <property type="entry name" value="Anticodon-binding domain of a subclass of class I aminoacyl-tRNA synthetases"/>
    <property type="match status" value="1"/>
</dbReference>
<dbReference type="Gene3D" id="3.40.50.620">
    <property type="entry name" value="HUPs"/>
    <property type="match status" value="1"/>
</dbReference>
<dbReference type="HAMAP" id="MF_01697">
    <property type="entry name" value="MshC"/>
    <property type="match status" value="1"/>
</dbReference>
<dbReference type="InterPro" id="IPR024909">
    <property type="entry name" value="Cys-tRNA/MSH_ligase"/>
</dbReference>
<dbReference type="InterPro" id="IPR017812">
    <property type="entry name" value="Mycothiol_ligase_MshC"/>
</dbReference>
<dbReference type="InterPro" id="IPR014729">
    <property type="entry name" value="Rossmann-like_a/b/a_fold"/>
</dbReference>
<dbReference type="InterPro" id="IPR032678">
    <property type="entry name" value="tRNA-synt_1_cat_dom"/>
</dbReference>
<dbReference type="NCBIfam" id="TIGR03447">
    <property type="entry name" value="mycothiol_MshC"/>
    <property type="match status" value="1"/>
</dbReference>
<dbReference type="PANTHER" id="PTHR10890:SF3">
    <property type="entry name" value="CYSTEINE--TRNA LIGASE, CYTOPLASMIC"/>
    <property type="match status" value="1"/>
</dbReference>
<dbReference type="PANTHER" id="PTHR10890">
    <property type="entry name" value="CYSTEINYL-TRNA SYNTHETASE"/>
    <property type="match status" value="1"/>
</dbReference>
<dbReference type="Pfam" id="PF01406">
    <property type="entry name" value="tRNA-synt_1e"/>
    <property type="match status" value="1"/>
</dbReference>
<dbReference type="PRINTS" id="PR00983">
    <property type="entry name" value="TRNASYNTHCYS"/>
</dbReference>
<dbReference type="SUPFAM" id="SSF52374">
    <property type="entry name" value="Nucleotidylyl transferase"/>
    <property type="match status" value="1"/>
</dbReference>
<name>MSHC_KYTSD</name>
<proteinExistence type="inferred from homology"/>
<comment type="function">
    <text evidence="1">Catalyzes the ATP-dependent condensation of GlcN-Ins and L-cysteine to form L-Cys-GlcN-Ins.</text>
</comment>
<comment type="catalytic activity">
    <reaction evidence="1">
        <text>1D-myo-inositol 2-amino-2-deoxy-alpha-D-glucopyranoside + L-cysteine + ATP = 1D-myo-inositol 2-(L-cysteinylamino)-2-deoxy-alpha-D-glucopyranoside + AMP + diphosphate + H(+)</text>
        <dbReference type="Rhea" id="RHEA:26176"/>
        <dbReference type="ChEBI" id="CHEBI:15378"/>
        <dbReference type="ChEBI" id="CHEBI:30616"/>
        <dbReference type="ChEBI" id="CHEBI:33019"/>
        <dbReference type="ChEBI" id="CHEBI:35235"/>
        <dbReference type="ChEBI" id="CHEBI:58886"/>
        <dbReference type="ChEBI" id="CHEBI:58887"/>
        <dbReference type="ChEBI" id="CHEBI:456215"/>
        <dbReference type="EC" id="6.3.1.13"/>
    </reaction>
</comment>
<comment type="cofactor">
    <cofactor evidence="1">
        <name>Zn(2+)</name>
        <dbReference type="ChEBI" id="CHEBI:29105"/>
    </cofactor>
    <text evidence="1">Binds 1 zinc ion per subunit.</text>
</comment>
<comment type="subunit">
    <text evidence="1">Monomer.</text>
</comment>
<comment type="similarity">
    <text evidence="1">Belongs to the class-I aminoacyl-tRNA synthetase family. MshC subfamily.</text>
</comment>